<organism>
    <name type="scientific">Streptococcus pneumoniae (strain ATCC BAA-255 / R6)</name>
    <dbReference type="NCBI Taxonomy" id="171101"/>
    <lineage>
        <taxon>Bacteria</taxon>
        <taxon>Bacillati</taxon>
        <taxon>Bacillota</taxon>
        <taxon>Bacilli</taxon>
        <taxon>Lactobacillales</taxon>
        <taxon>Streptococcaceae</taxon>
        <taxon>Streptococcus</taxon>
    </lineage>
</organism>
<accession>Q8DRM1</accession>
<name>PUR9_STRR6</name>
<reference key="1">
    <citation type="journal article" date="2001" name="J. Bacteriol.">
        <title>Genome of the bacterium Streptococcus pneumoniae strain R6.</title>
        <authorList>
            <person name="Hoskins J."/>
            <person name="Alborn W.E. Jr."/>
            <person name="Arnold J."/>
            <person name="Blaszczak L.C."/>
            <person name="Burgett S."/>
            <person name="DeHoff B.S."/>
            <person name="Estrem S.T."/>
            <person name="Fritz L."/>
            <person name="Fu D.-J."/>
            <person name="Fuller W."/>
            <person name="Geringer C."/>
            <person name="Gilmour R."/>
            <person name="Glass J.S."/>
            <person name="Khoja H."/>
            <person name="Kraft A.R."/>
            <person name="Lagace R.E."/>
            <person name="LeBlanc D.J."/>
            <person name="Lee L.N."/>
            <person name="Lefkowitz E.J."/>
            <person name="Lu J."/>
            <person name="Matsushima P."/>
            <person name="McAhren S.M."/>
            <person name="McHenney M."/>
            <person name="McLeaster K."/>
            <person name="Mundy C.W."/>
            <person name="Nicas T.I."/>
            <person name="Norris F.H."/>
            <person name="O'Gara M."/>
            <person name="Peery R.B."/>
            <person name="Robertson G.T."/>
            <person name="Rockey P."/>
            <person name="Sun P.-M."/>
            <person name="Winkler M.E."/>
            <person name="Yang Y."/>
            <person name="Young-Bellido M."/>
            <person name="Zhao G."/>
            <person name="Zook C.A."/>
            <person name="Baltz R.H."/>
            <person name="Jaskunas S.R."/>
            <person name="Rosteck P.R. Jr."/>
            <person name="Skatrud P.L."/>
            <person name="Glass J.I."/>
        </authorList>
    </citation>
    <scope>NUCLEOTIDE SEQUENCE [LARGE SCALE GENOMIC DNA]</scope>
    <source>
        <strain>ATCC BAA-255 / R6</strain>
    </source>
</reference>
<proteinExistence type="inferred from homology"/>
<gene>
    <name evidence="1" type="primary">purH</name>
    <name type="ordered locus">spr0051</name>
</gene>
<comment type="catalytic activity">
    <reaction evidence="1">
        <text>(6R)-10-formyltetrahydrofolate + 5-amino-1-(5-phospho-beta-D-ribosyl)imidazole-4-carboxamide = 5-formamido-1-(5-phospho-D-ribosyl)imidazole-4-carboxamide + (6S)-5,6,7,8-tetrahydrofolate</text>
        <dbReference type="Rhea" id="RHEA:22192"/>
        <dbReference type="ChEBI" id="CHEBI:57453"/>
        <dbReference type="ChEBI" id="CHEBI:58467"/>
        <dbReference type="ChEBI" id="CHEBI:58475"/>
        <dbReference type="ChEBI" id="CHEBI:195366"/>
        <dbReference type="EC" id="2.1.2.3"/>
    </reaction>
</comment>
<comment type="catalytic activity">
    <reaction evidence="1">
        <text>IMP + H2O = 5-formamido-1-(5-phospho-D-ribosyl)imidazole-4-carboxamide</text>
        <dbReference type="Rhea" id="RHEA:18445"/>
        <dbReference type="ChEBI" id="CHEBI:15377"/>
        <dbReference type="ChEBI" id="CHEBI:58053"/>
        <dbReference type="ChEBI" id="CHEBI:58467"/>
        <dbReference type="EC" id="3.5.4.10"/>
    </reaction>
</comment>
<comment type="pathway">
    <text evidence="1">Purine metabolism; IMP biosynthesis via de novo pathway; 5-formamido-1-(5-phospho-D-ribosyl)imidazole-4-carboxamide from 5-amino-1-(5-phospho-D-ribosyl)imidazole-4-carboxamide (10-formyl THF route): step 1/1.</text>
</comment>
<comment type="pathway">
    <text evidence="1">Purine metabolism; IMP biosynthesis via de novo pathway; IMP from 5-formamido-1-(5-phospho-D-ribosyl)imidazole-4-carboxamide: step 1/1.</text>
</comment>
<comment type="domain">
    <text evidence="1">The IMP cyclohydrolase activity resides in the N-terminal region.</text>
</comment>
<comment type="similarity">
    <text evidence="1">Belongs to the PurH family.</text>
</comment>
<comment type="sequence caution" evidence="3">
    <conflict type="erroneous initiation">
        <sequence resource="EMBL-CDS" id="AAK98855"/>
    </conflict>
</comment>
<keyword id="KW-0378">Hydrolase</keyword>
<keyword id="KW-0511">Multifunctional enzyme</keyword>
<keyword id="KW-0658">Purine biosynthesis</keyword>
<keyword id="KW-1185">Reference proteome</keyword>
<keyword id="KW-0808">Transferase</keyword>
<evidence type="ECO:0000255" key="1">
    <source>
        <dbReference type="HAMAP-Rule" id="MF_00139"/>
    </source>
</evidence>
<evidence type="ECO:0000255" key="2">
    <source>
        <dbReference type="PROSITE-ProRule" id="PRU01202"/>
    </source>
</evidence>
<evidence type="ECO:0000305" key="3"/>
<sequence>MTKRVLISVSDKAGIVEFAQELKKLGWEIISTGGTKVALDNAGVETIAIDDVTGFPEMMDGRVKTLHPNIHGGLLARRDLDSHLEAANENQIELIDLVVVNLYPFKETILKPDVTYADAVENIDIGGPSMLRSAAKNHASVTVVVDPADYTVVLDELSANGETTYETRQRLAAKVFRHTAAYDALIAEYFTAQVGESKPEKLTLTYDLKQAMRYGENPQQDADFYQKALPTDYSIASAKQLNGKELSFNNIRDADAAIRIIRDFKDRPTVVALKHMNPCGIGQADDIETAWDYAYESDPVSIFGGIAVLNREVDAATAEKMHGVFLEIIIAPSYTDEALAILINKKKNLRILALPFNAQEASEVEAEYTGVVGGLLVQNQDVVKESPADWQVVTKRQPTETEATALEFAWKAIKYVKSNGIIVTNDHMTLGVGPGQTNRVASVRLAIDQAKDRLDGAVLASDAFFPFADNVEEIAKAGIKAIIQPGGSVRDQESIEAADKYGLTMVFTGVRHFRH</sequence>
<dbReference type="EC" id="2.1.2.3" evidence="1"/>
<dbReference type="EC" id="3.5.4.10" evidence="1"/>
<dbReference type="EMBL" id="AE007317">
    <property type="protein sequence ID" value="AAK98855.1"/>
    <property type="status" value="ALT_INIT"/>
    <property type="molecule type" value="Genomic_DNA"/>
</dbReference>
<dbReference type="PIR" id="C97878">
    <property type="entry name" value="C97878"/>
</dbReference>
<dbReference type="RefSeq" id="NP_357645.1">
    <property type="nucleotide sequence ID" value="NC_003098.1"/>
</dbReference>
<dbReference type="RefSeq" id="WP_000167096.1">
    <property type="nucleotide sequence ID" value="NC_003098.1"/>
</dbReference>
<dbReference type="SMR" id="Q8DRM1"/>
<dbReference type="STRING" id="171101.spr0051"/>
<dbReference type="KEGG" id="spr:spr0051"/>
<dbReference type="PATRIC" id="fig|171101.6.peg.59"/>
<dbReference type="eggNOG" id="COG0138">
    <property type="taxonomic scope" value="Bacteria"/>
</dbReference>
<dbReference type="HOGENOM" id="CLU_016316_5_2_9"/>
<dbReference type="UniPathway" id="UPA00074">
    <property type="reaction ID" value="UER00133"/>
</dbReference>
<dbReference type="UniPathway" id="UPA00074">
    <property type="reaction ID" value="UER00135"/>
</dbReference>
<dbReference type="Proteomes" id="UP000000586">
    <property type="component" value="Chromosome"/>
</dbReference>
<dbReference type="GO" id="GO:0005829">
    <property type="term" value="C:cytosol"/>
    <property type="evidence" value="ECO:0000318"/>
    <property type="project" value="GO_Central"/>
</dbReference>
<dbReference type="GO" id="GO:0003937">
    <property type="term" value="F:IMP cyclohydrolase activity"/>
    <property type="evidence" value="ECO:0000318"/>
    <property type="project" value="GO_Central"/>
</dbReference>
<dbReference type="GO" id="GO:0004643">
    <property type="term" value="F:phosphoribosylaminoimidazolecarboxamide formyltransferase activity"/>
    <property type="evidence" value="ECO:0000318"/>
    <property type="project" value="GO_Central"/>
</dbReference>
<dbReference type="GO" id="GO:0006189">
    <property type="term" value="P:'de novo' IMP biosynthetic process"/>
    <property type="evidence" value="ECO:0000318"/>
    <property type="project" value="GO_Central"/>
</dbReference>
<dbReference type="CDD" id="cd01421">
    <property type="entry name" value="IMPCH"/>
    <property type="match status" value="1"/>
</dbReference>
<dbReference type="FunFam" id="3.40.140.20:FF:000001">
    <property type="entry name" value="Bifunctional purine biosynthesis protein PurH"/>
    <property type="match status" value="1"/>
</dbReference>
<dbReference type="FunFam" id="3.40.140.20:FF:000002">
    <property type="entry name" value="Bifunctional purine biosynthesis protein PurH"/>
    <property type="match status" value="1"/>
</dbReference>
<dbReference type="FunFam" id="3.40.50.1380:FF:000001">
    <property type="entry name" value="Bifunctional purine biosynthesis protein PurH"/>
    <property type="match status" value="1"/>
</dbReference>
<dbReference type="Gene3D" id="3.40.140.20">
    <property type="match status" value="2"/>
</dbReference>
<dbReference type="Gene3D" id="3.40.50.1380">
    <property type="entry name" value="Methylglyoxal synthase-like domain"/>
    <property type="match status" value="1"/>
</dbReference>
<dbReference type="HAMAP" id="MF_00139">
    <property type="entry name" value="PurH"/>
    <property type="match status" value="1"/>
</dbReference>
<dbReference type="InterPro" id="IPR024051">
    <property type="entry name" value="AICAR_Tfase_dup_dom_sf"/>
</dbReference>
<dbReference type="InterPro" id="IPR016193">
    <property type="entry name" value="Cytidine_deaminase-like"/>
</dbReference>
<dbReference type="InterPro" id="IPR011607">
    <property type="entry name" value="MGS-like_dom"/>
</dbReference>
<dbReference type="InterPro" id="IPR036914">
    <property type="entry name" value="MGS-like_dom_sf"/>
</dbReference>
<dbReference type="InterPro" id="IPR002695">
    <property type="entry name" value="PurH-like"/>
</dbReference>
<dbReference type="NCBIfam" id="NF002049">
    <property type="entry name" value="PRK00881.1"/>
    <property type="match status" value="1"/>
</dbReference>
<dbReference type="NCBIfam" id="TIGR00355">
    <property type="entry name" value="purH"/>
    <property type="match status" value="1"/>
</dbReference>
<dbReference type="PANTHER" id="PTHR11692:SF0">
    <property type="entry name" value="BIFUNCTIONAL PURINE BIOSYNTHESIS PROTEIN ATIC"/>
    <property type="match status" value="1"/>
</dbReference>
<dbReference type="PANTHER" id="PTHR11692">
    <property type="entry name" value="BIFUNCTIONAL PURINE BIOSYNTHESIS PROTEIN PURH"/>
    <property type="match status" value="1"/>
</dbReference>
<dbReference type="Pfam" id="PF01808">
    <property type="entry name" value="AICARFT_IMPCHas"/>
    <property type="match status" value="1"/>
</dbReference>
<dbReference type="Pfam" id="PF02142">
    <property type="entry name" value="MGS"/>
    <property type="match status" value="1"/>
</dbReference>
<dbReference type="PIRSF" id="PIRSF000414">
    <property type="entry name" value="AICARFT_IMPCHas"/>
    <property type="match status" value="1"/>
</dbReference>
<dbReference type="SMART" id="SM00798">
    <property type="entry name" value="AICARFT_IMPCHas"/>
    <property type="match status" value="1"/>
</dbReference>
<dbReference type="SMART" id="SM00851">
    <property type="entry name" value="MGS"/>
    <property type="match status" value="1"/>
</dbReference>
<dbReference type="SUPFAM" id="SSF53927">
    <property type="entry name" value="Cytidine deaminase-like"/>
    <property type="match status" value="1"/>
</dbReference>
<dbReference type="SUPFAM" id="SSF52335">
    <property type="entry name" value="Methylglyoxal synthase-like"/>
    <property type="match status" value="1"/>
</dbReference>
<dbReference type="PROSITE" id="PS51855">
    <property type="entry name" value="MGS"/>
    <property type="match status" value="1"/>
</dbReference>
<protein>
    <recommendedName>
        <fullName evidence="1">Bifunctional purine biosynthesis protein PurH</fullName>
    </recommendedName>
    <domain>
        <recommendedName>
            <fullName evidence="1">Phosphoribosylaminoimidazolecarboxamide formyltransferase</fullName>
            <ecNumber evidence="1">2.1.2.3</ecNumber>
        </recommendedName>
        <alternativeName>
            <fullName evidence="1">AICAR transformylase</fullName>
        </alternativeName>
    </domain>
    <domain>
        <recommendedName>
            <fullName evidence="1">IMP cyclohydrolase</fullName>
            <ecNumber evidence="1">3.5.4.10</ecNumber>
        </recommendedName>
        <alternativeName>
            <fullName evidence="1">ATIC</fullName>
        </alternativeName>
        <alternativeName>
            <fullName evidence="1">IMP synthase</fullName>
        </alternativeName>
        <alternativeName>
            <fullName evidence="1">Inosinicase</fullName>
        </alternativeName>
    </domain>
</protein>
<feature type="chain" id="PRO_0000192135" description="Bifunctional purine biosynthesis protein PurH">
    <location>
        <begin position="1"/>
        <end position="515"/>
    </location>
</feature>
<feature type="domain" description="MGS-like" evidence="2">
    <location>
        <begin position="1"/>
        <end position="145"/>
    </location>
</feature>